<organism>
    <name type="scientific">Bos taurus</name>
    <name type="common">Bovine</name>
    <dbReference type="NCBI Taxonomy" id="9913"/>
    <lineage>
        <taxon>Eukaryota</taxon>
        <taxon>Metazoa</taxon>
        <taxon>Chordata</taxon>
        <taxon>Craniata</taxon>
        <taxon>Vertebrata</taxon>
        <taxon>Euteleostomi</taxon>
        <taxon>Mammalia</taxon>
        <taxon>Eutheria</taxon>
        <taxon>Laurasiatheria</taxon>
        <taxon>Artiodactyla</taxon>
        <taxon>Ruminantia</taxon>
        <taxon>Pecora</taxon>
        <taxon>Bovidae</taxon>
        <taxon>Bovinae</taxon>
        <taxon>Bos</taxon>
    </lineage>
</organism>
<protein>
    <recommendedName>
        <fullName>Serine/threonine-protein kinase greatwall</fullName>
        <shortName>GW</shortName>
        <shortName>GWL</shortName>
        <ecNumber evidence="2">2.7.11.1</ecNumber>
    </recommendedName>
    <alternativeName>
        <fullName>Microtubule-associated serine/threonine-protein kinase-like</fullName>
        <shortName>MAST-L</shortName>
    </alternativeName>
</protein>
<dbReference type="EC" id="2.7.11.1" evidence="2"/>
<dbReference type="EMBL" id="AAFC03049560">
    <property type="status" value="NOT_ANNOTATED_CDS"/>
    <property type="molecule type" value="Genomic_DNA"/>
</dbReference>
<dbReference type="SMR" id="E1BFR5"/>
<dbReference type="FunCoup" id="E1BFR5">
    <property type="interactions" value="2223"/>
</dbReference>
<dbReference type="STRING" id="9913.ENSBTAP00000022950"/>
<dbReference type="PaxDb" id="9913-ENSBTAP00000022950"/>
<dbReference type="eggNOG" id="KOG0606">
    <property type="taxonomic scope" value="Eukaryota"/>
</dbReference>
<dbReference type="HOGENOM" id="CLU_016048_0_0_1"/>
<dbReference type="InParanoid" id="E1BFR5"/>
<dbReference type="OrthoDB" id="162894at2759"/>
<dbReference type="Proteomes" id="UP000009136">
    <property type="component" value="Unplaced"/>
</dbReference>
<dbReference type="GO" id="GO:0005813">
    <property type="term" value="C:centrosome"/>
    <property type="evidence" value="ECO:0000250"/>
    <property type="project" value="UniProtKB"/>
</dbReference>
<dbReference type="GO" id="GO:0032154">
    <property type="term" value="C:cleavage furrow"/>
    <property type="evidence" value="ECO:0000250"/>
    <property type="project" value="UniProtKB"/>
</dbReference>
<dbReference type="GO" id="GO:0005737">
    <property type="term" value="C:cytoplasm"/>
    <property type="evidence" value="ECO:0007669"/>
    <property type="project" value="UniProtKB-KW"/>
</dbReference>
<dbReference type="GO" id="GO:0005634">
    <property type="term" value="C:nucleus"/>
    <property type="evidence" value="ECO:0000250"/>
    <property type="project" value="UniProtKB"/>
</dbReference>
<dbReference type="GO" id="GO:0005524">
    <property type="term" value="F:ATP binding"/>
    <property type="evidence" value="ECO:0007669"/>
    <property type="project" value="UniProtKB-KW"/>
</dbReference>
<dbReference type="GO" id="GO:0051721">
    <property type="term" value="F:protein phosphatase 2A binding"/>
    <property type="evidence" value="ECO:0000250"/>
    <property type="project" value="UniProtKB"/>
</dbReference>
<dbReference type="GO" id="GO:0106310">
    <property type="term" value="F:protein serine kinase activity"/>
    <property type="evidence" value="ECO:0007669"/>
    <property type="project" value="RHEA"/>
</dbReference>
<dbReference type="GO" id="GO:0004674">
    <property type="term" value="F:protein serine/threonine kinase activity"/>
    <property type="evidence" value="ECO:0000250"/>
    <property type="project" value="UniProtKB"/>
</dbReference>
<dbReference type="GO" id="GO:0051301">
    <property type="term" value="P:cell division"/>
    <property type="evidence" value="ECO:0007669"/>
    <property type="project" value="UniProtKB-KW"/>
</dbReference>
<dbReference type="GO" id="GO:0006974">
    <property type="term" value="P:DNA damage response"/>
    <property type="evidence" value="ECO:0000250"/>
    <property type="project" value="UniProtKB"/>
</dbReference>
<dbReference type="GO" id="GO:0000086">
    <property type="term" value="P:G2/M transition of mitotic cell cycle"/>
    <property type="evidence" value="ECO:0000250"/>
    <property type="project" value="UniProtKB"/>
</dbReference>
<dbReference type="GO" id="GO:0035556">
    <property type="term" value="P:intracellular signal transduction"/>
    <property type="evidence" value="ECO:0000318"/>
    <property type="project" value="GO_Central"/>
</dbReference>
<dbReference type="GO" id="GO:0000278">
    <property type="term" value="P:mitotic cell cycle"/>
    <property type="evidence" value="ECO:0000250"/>
    <property type="project" value="UniProtKB"/>
</dbReference>
<dbReference type="FunFam" id="1.10.510.10:FF:000278">
    <property type="entry name" value="serine/threonine-protein kinase greatwall isoform X1"/>
    <property type="match status" value="1"/>
</dbReference>
<dbReference type="FunFam" id="1.10.510.10:FF:001219">
    <property type="entry name" value="serine/threonine-protein kinase greatwall isoform X1"/>
    <property type="match status" value="1"/>
</dbReference>
<dbReference type="FunFam" id="3.30.200.20:FF:000277">
    <property type="entry name" value="serine/threonine-protein kinase greatwall isoform X1"/>
    <property type="match status" value="1"/>
</dbReference>
<dbReference type="Gene3D" id="3.30.200.20">
    <property type="entry name" value="Phosphorylase Kinase, domain 1"/>
    <property type="match status" value="2"/>
</dbReference>
<dbReference type="Gene3D" id="1.10.510.10">
    <property type="entry name" value="Transferase(Phosphotransferase) domain 1"/>
    <property type="match status" value="2"/>
</dbReference>
<dbReference type="InterPro" id="IPR000961">
    <property type="entry name" value="AGC-kinase_C"/>
</dbReference>
<dbReference type="InterPro" id="IPR011009">
    <property type="entry name" value="Kinase-like_dom_sf"/>
</dbReference>
<dbReference type="InterPro" id="IPR000719">
    <property type="entry name" value="Prot_kinase_dom"/>
</dbReference>
<dbReference type="InterPro" id="IPR008271">
    <property type="entry name" value="Ser/Thr_kinase_AS"/>
</dbReference>
<dbReference type="InterPro" id="IPR050236">
    <property type="entry name" value="Ser_Thr_kinase_AGC"/>
</dbReference>
<dbReference type="PANTHER" id="PTHR24356">
    <property type="entry name" value="SERINE/THREONINE-PROTEIN KINASE"/>
    <property type="match status" value="1"/>
</dbReference>
<dbReference type="PANTHER" id="PTHR24356:SF1">
    <property type="entry name" value="SERINE_THREONINE-PROTEIN KINASE GREATWALL"/>
    <property type="match status" value="1"/>
</dbReference>
<dbReference type="Pfam" id="PF00069">
    <property type="entry name" value="Pkinase"/>
    <property type="match status" value="2"/>
</dbReference>
<dbReference type="SMART" id="SM00220">
    <property type="entry name" value="S_TKc"/>
    <property type="match status" value="1"/>
</dbReference>
<dbReference type="SUPFAM" id="SSF56112">
    <property type="entry name" value="Protein kinase-like (PK-like)"/>
    <property type="match status" value="1"/>
</dbReference>
<dbReference type="PROSITE" id="PS51285">
    <property type="entry name" value="AGC_KINASE_CTER"/>
    <property type="match status" value="1"/>
</dbReference>
<dbReference type="PROSITE" id="PS50011">
    <property type="entry name" value="PROTEIN_KINASE_DOM"/>
    <property type="match status" value="1"/>
</dbReference>
<dbReference type="PROSITE" id="PS00108">
    <property type="entry name" value="PROTEIN_KINASE_ST"/>
    <property type="match status" value="1"/>
</dbReference>
<reference key="1">
    <citation type="journal article" date="2009" name="Science">
        <title>The genome sequence of taurine cattle: a window to ruminant biology and evolution.</title>
        <authorList>
            <consortium name="The bovine genome sequencing and analysis consortium"/>
        </authorList>
    </citation>
    <scope>NUCLEOTIDE SEQUENCE [LARGE SCALE GENOMIC DNA]</scope>
</reference>
<accession>E1BFR5</accession>
<evidence type="ECO:0000250" key="1"/>
<evidence type="ECO:0000250" key="2">
    <source>
        <dbReference type="UniProtKB" id="Q96GX5"/>
    </source>
</evidence>
<evidence type="ECO:0000255" key="3">
    <source>
        <dbReference type="PROSITE-ProRule" id="PRU00159"/>
    </source>
</evidence>
<evidence type="ECO:0000255" key="4">
    <source>
        <dbReference type="PROSITE-ProRule" id="PRU00618"/>
    </source>
</evidence>
<evidence type="ECO:0000255" key="5">
    <source>
        <dbReference type="PROSITE-ProRule" id="PRU10027"/>
    </source>
</evidence>
<evidence type="ECO:0000256" key="6">
    <source>
        <dbReference type="SAM" id="MobiDB-lite"/>
    </source>
</evidence>
<evidence type="ECO:0000305" key="7"/>
<gene>
    <name type="primary">MASTL</name>
    <name type="synonym">GW</name>
    <name type="synonym">GWL</name>
</gene>
<sequence length="883" mass="98072">MEPTMGGEMESGGGAATGECVNRIPVPRPPSIEEFTIVKPISRGAFGKVYLGQKGNRLYAVKVVKKADMINKNMTHQVQAERDALALSKSPFIVHLYYSLQSANNVYLVMEYLIGGDVKSLLHIYGYFDEEMAVKYISEVALALDYLHRHGIIHRDLKPDNMLISNEGHIKLTDFGLSKVTLNRDIDINMMDILTTPSMAKPRQDYSRTPGQVLSLISSLGFHTPVAEGNHDTANVLSTQVSETSPLSQGLTCPMSVDQKDTTPYSSKLLKSCPEMVASHPRMPVKCLTSHLLQSRKRLATSSTSSPSHTFISSMESECHSSPRWEKDCQESDDAAGSTMMSWNTVEKPLCTKSVDAMETKSFNERDLELALSPIHNSSVVPATGNSYVNLAKKCSSGEVSWEARELDVNNINMTADTSQYCFHESNQRAVDSGGMTEEHLGKRSCKRIFELVDSSPRQGIIPNKKSCFEYECSNEMRDCYATQRTGFAFEVQDLKLLVYRDQQNDCVNKENVGSSFTDKHQTPEKSPVPMIEKNLMCELDDDCDKNSKKDYLSSSFLCSDGDRTPKSIHMDSDSSFPGISIMESPLGGQSLDPDKNIKESSLEESNIEDLLPVSPSCQESTLPKGVECPTIQDSNQKMLAPSSEVLKPLTSKRNAVAFRSFNSHINASNSSEPSKMSITSLDMMDVSCAYSGSYPTAITPTQRERSDMPYQQTPNQVKSETPYRTPKSVRRGAAPVDDGRILGTPDYLAPELLLARAHGPAVDWWALGVCLFEFLTGIPPFNDETPQQVFQNILKRDIPWPEGEEKLSDNAQSAVDILLTIDDTKRAGMKELKHHPLFSGVDWENLQHQKMPFIPQPDDETDTSYFEARNNAQHLTVSGFSL</sequence>
<name>GWL_BOVIN</name>
<comment type="function">
    <text evidence="2">Serine/threonine kinase that plays a key role in M phase by acting as a regulator of mitosis entry and maintenance (By similarity). Acts by promoting the inactivation of protein phosphatase 2A (PP2A) during M phase: does not directly inhibit PP2A but acts by mediating phosphorylation and subsequent activation of ARPP19 and ENSA at 'Ser-62' and 'Ser-67', respectively (By similarity). ARPP19 and ENSA are phosphatase inhibitors that specifically inhibit the PPP2R2D (PR55-delta) subunit of PP2A. Inactivation of PP2A during M phase is essential to keep cyclin-B1-CDK1 activity high. Following DNA damage, it is also involved in checkpoint recovery by being inhibited (By similarity).</text>
</comment>
<comment type="catalytic activity">
    <reaction evidence="2">
        <text>L-seryl-[protein] + ATP = O-phospho-L-seryl-[protein] + ADP + H(+)</text>
        <dbReference type="Rhea" id="RHEA:17989"/>
        <dbReference type="Rhea" id="RHEA-COMP:9863"/>
        <dbReference type="Rhea" id="RHEA-COMP:11604"/>
        <dbReference type="ChEBI" id="CHEBI:15378"/>
        <dbReference type="ChEBI" id="CHEBI:29999"/>
        <dbReference type="ChEBI" id="CHEBI:30616"/>
        <dbReference type="ChEBI" id="CHEBI:83421"/>
        <dbReference type="ChEBI" id="CHEBI:456216"/>
        <dbReference type="EC" id="2.7.11.1"/>
    </reaction>
</comment>
<comment type="catalytic activity">
    <reaction evidence="2">
        <text>L-threonyl-[protein] + ATP = O-phospho-L-threonyl-[protein] + ADP + H(+)</text>
        <dbReference type="Rhea" id="RHEA:46608"/>
        <dbReference type="Rhea" id="RHEA-COMP:11060"/>
        <dbReference type="Rhea" id="RHEA-COMP:11605"/>
        <dbReference type="ChEBI" id="CHEBI:15378"/>
        <dbReference type="ChEBI" id="CHEBI:30013"/>
        <dbReference type="ChEBI" id="CHEBI:30616"/>
        <dbReference type="ChEBI" id="CHEBI:61977"/>
        <dbReference type="ChEBI" id="CHEBI:456216"/>
        <dbReference type="EC" id="2.7.11.1"/>
    </reaction>
</comment>
<comment type="subcellular location">
    <subcellularLocation>
        <location evidence="1">Cytoplasm</location>
        <location evidence="1">Cytoskeleton</location>
        <location evidence="1">Microtubule organizing center</location>
        <location evidence="1">Centrosome</location>
    </subcellularLocation>
    <subcellularLocation>
        <location>Nucleus</location>
    </subcellularLocation>
    <text evidence="1">During interphase is mainly nuclear, upon nuclear envelope breakdown localizes at the cytoplasm and during mitosis at the centrosomes.</text>
</comment>
<comment type="PTM">
    <text evidence="1">Phosphorylation at Thr-745 by CDK1 during M phase activates its kinase activity. Maximum phosphorylation occurs in prometaphase (By similarity).</text>
</comment>
<comment type="similarity">
    <text evidence="7">Belongs to the protein kinase superfamily. AGC Ser/Thr protein kinase family.</text>
</comment>
<keyword id="KW-0007">Acetylation</keyword>
<keyword id="KW-0067">ATP-binding</keyword>
<keyword id="KW-0131">Cell cycle</keyword>
<keyword id="KW-0132">Cell division</keyword>
<keyword id="KW-0963">Cytoplasm</keyword>
<keyword id="KW-0206">Cytoskeleton</keyword>
<keyword id="KW-0418">Kinase</keyword>
<keyword id="KW-0498">Mitosis</keyword>
<keyword id="KW-0547">Nucleotide-binding</keyword>
<keyword id="KW-0539">Nucleus</keyword>
<keyword id="KW-0597">Phosphoprotein</keyword>
<keyword id="KW-1185">Reference proteome</keyword>
<keyword id="KW-0723">Serine/threonine-protein kinase</keyword>
<keyword id="KW-0808">Transferase</keyword>
<feature type="chain" id="PRO_0000408314" description="Serine/threonine-protein kinase greatwall">
    <location>
        <begin position="1"/>
        <end position="883"/>
    </location>
</feature>
<feature type="domain" description="Protein kinase" evidence="3">
    <location>
        <begin position="35"/>
        <end position="839"/>
    </location>
</feature>
<feature type="domain" description="AGC-kinase C-terminal" evidence="4">
    <location>
        <begin position="840"/>
        <end position="883"/>
    </location>
</feature>
<feature type="region of interest" description="Disordered" evidence="6">
    <location>
        <begin position="1"/>
        <end position="23"/>
    </location>
</feature>
<feature type="region of interest" description="Disordered" evidence="6">
    <location>
        <begin position="298"/>
        <end position="317"/>
    </location>
</feature>
<feature type="region of interest" description="Disordered" evidence="6">
    <location>
        <begin position="511"/>
        <end position="530"/>
    </location>
</feature>
<feature type="region of interest" description="Disordered" evidence="6">
    <location>
        <begin position="569"/>
        <end position="597"/>
    </location>
</feature>
<feature type="region of interest" description="Disordered" evidence="6">
    <location>
        <begin position="706"/>
        <end position="737"/>
    </location>
</feature>
<feature type="compositionally biased region" description="Low complexity" evidence="6">
    <location>
        <begin position="301"/>
        <end position="314"/>
    </location>
</feature>
<feature type="compositionally biased region" description="Polar residues" evidence="6">
    <location>
        <begin position="710"/>
        <end position="720"/>
    </location>
</feature>
<feature type="active site" description="Proton acceptor" evidence="3 5">
    <location>
        <position position="156"/>
    </location>
</feature>
<feature type="binding site" evidence="3">
    <location>
        <begin position="41"/>
        <end position="49"/>
    </location>
    <ligand>
        <name>ATP</name>
        <dbReference type="ChEBI" id="CHEBI:30616"/>
    </ligand>
</feature>
<feature type="binding site" evidence="3">
    <location>
        <position position="62"/>
    </location>
    <ligand>
        <name>ATP</name>
        <dbReference type="ChEBI" id="CHEBI:30616"/>
    </ligand>
</feature>
<feature type="modified residue" description="N-acetylmethionine" evidence="2">
    <location>
        <position position="1"/>
    </location>
</feature>
<feature type="modified residue" description="Phosphothreonine" evidence="2">
    <location>
        <position position="209"/>
    </location>
</feature>
<feature type="modified residue" description="Phosphothreonine" evidence="2">
    <location>
        <position position="224"/>
    </location>
</feature>
<feature type="modified residue" description="Phosphoserine" evidence="2">
    <location>
        <position position="295"/>
    </location>
</feature>
<feature type="modified residue" description="Phosphoserine" evidence="2">
    <location>
        <position position="373"/>
    </location>
</feature>
<feature type="modified residue" description="Phosphoserine" evidence="2">
    <location>
        <position position="456"/>
    </location>
</feature>
<feature type="modified residue" description="Phosphothreonine" evidence="2">
    <location>
        <position position="523"/>
    </location>
</feature>
<feature type="modified residue" description="Phosphoserine" evidence="2">
    <location>
        <position position="556"/>
    </location>
</feature>
<feature type="modified residue" description="Phosphoserine" evidence="2">
    <location>
        <position position="560"/>
    </location>
</feature>
<feature type="modified residue" description="Phosphoserine" evidence="2">
    <location>
        <position position="635"/>
    </location>
</feature>
<feature type="modified residue" description="Phosphoserine" evidence="2">
    <location>
        <position position="661"/>
    </location>
</feature>
<feature type="modified residue" description="Phosphoserine" evidence="2">
    <location>
        <position position="672"/>
    </location>
</feature>
<feature type="modified residue" description="Phosphothreonine" evidence="2">
    <location>
        <position position="726"/>
    </location>
</feature>
<feature type="modified residue" description="Phosphoserine" evidence="2">
    <location>
        <position position="729"/>
    </location>
</feature>
<feature type="modified residue" description="Phosphothreonine; by CDK1" evidence="2">
    <location>
        <position position="745"/>
    </location>
</feature>
<feature type="modified residue" description="Phosphoserine" evidence="2">
    <location>
        <position position="879"/>
    </location>
</feature>
<feature type="modified residue" description="Phosphoserine" evidence="2">
    <location>
        <position position="882"/>
    </location>
</feature>
<proteinExistence type="inferred from homology"/>